<gene>
    <name evidence="1" type="primary">ndhB2</name>
</gene>
<sequence>MIWHVQNENFILDSTRIFMKAFHLLLFDGSLIVPECILIFGLILLLMIDSTSDQKDIPWLYFISSTSLVMSITALLFRWREEPVISFSGNFQTNNFNEIFQFLILLCSTLCIPLSVEYIECTEMAITEFLLFVLTATLGGMFLCGANDLITIFVAPECFSLCSYLLSGYTKKDVRSNEATMKYLLMGGASSSILVHGFSWLYGSSGGEIELQEIVNGLINTQMYNSPGISIALIFITVGIGFKLSPAPSHQWTPDVYEGSPTPVVAFLSVTSKVAASASATRIFDIPFYFSSNEWHLLLETLAILSMILGNLIAITQTSMKRMLAYSSIGQIGYVIIGIIVGDSNDGYASMITYMLFYISMNLGTFACIVLFGLRTGTDNIRDYAGLYTKDPFLALSLALCLLSLGGLPPLAGFFGKLYLFWCGWQAGLYFLVLIGLLTSVVSIYYYLKIIKLLMTGRTQEITPHVRNYRRSPFRSNNSIELSMIVCVIASTIPGISMNPIIAIAQDTLF</sequence>
<proteinExistence type="inferred from homology"/>
<feature type="chain" id="PRO_0000391265" description="NAD(P)H-quinone oxidoreductase subunit 2 B, chloroplastic">
    <location>
        <begin position="1"/>
        <end position="510"/>
    </location>
</feature>
<feature type="transmembrane region" description="Helical" evidence="1">
    <location>
        <begin position="24"/>
        <end position="44"/>
    </location>
</feature>
<feature type="transmembrane region" description="Helical" evidence="1">
    <location>
        <begin position="57"/>
        <end position="77"/>
    </location>
</feature>
<feature type="transmembrane region" description="Helical" evidence="1">
    <location>
        <begin position="99"/>
        <end position="119"/>
    </location>
</feature>
<feature type="transmembrane region" description="Helical" evidence="1">
    <location>
        <begin position="124"/>
        <end position="144"/>
    </location>
</feature>
<feature type="transmembrane region" description="Helical" evidence="1">
    <location>
        <begin position="149"/>
        <end position="169"/>
    </location>
</feature>
<feature type="transmembrane region" description="Helical" evidence="1">
    <location>
        <begin position="183"/>
        <end position="203"/>
    </location>
</feature>
<feature type="transmembrane region" description="Helical" evidence="1">
    <location>
        <begin position="227"/>
        <end position="247"/>
    </location>
</feature>
<feature type="transmembrane region" description="Helical" evidence="1">
    <location>
        <begin position="295"/>
        <end position="315"/>
    </location>
</feature>
<feature type="transmembrane region" description="Helical" evidence="1">
    <location>
        <begin position="323"/>
        <end position="343"/>
    </location>
</feature>
<feature type="transmembrane region" description="Helical" evidence="1">
    <location>
        <begin position="354"/>
        <end position="374"/>
    </location>
</feature>
<feature type="transmembrane region" description="Helical" evidence="1">
    <location>
        <begin position="395"/>
        <end position="415"/>
    </location>
</feature>
<feature type="transmembrane region" description="Helical" evidence="1">
    <location>
        <begin position="418"/>
        <end position="438"/>
    </location>
</feature>
<feature type="transmembrane region" description="Helical" evidence="1">
    <location>
        <begin position="484"/>
        <end position="504"/>
    </location>
</feature>
<geneLocation type="chloroplast"/>
<reference key="1">
    <citation type="journal article" date="2006" name="BMC Genomics">
        <title>Complete plastid genome sequence of Daucus carota: implications for biotechnology and phylogeny of angiosperms.</title>
        <authorList>
            <person name="Ruhlman T."/>
            <person name="Lee S.-B."/>
            <person name="Jansen R.K."/>
            <person name="Hostetler J.B."/>
            <person name="Tallon L.J."/>
            <person name="Town C.D."/>
            <person name="Daniell H."/>
        </authorList>
    </citation>
    <scope>NUCLEOTIDE SEQUENCE [LARGE SCALE GENOMIC DNA]</scope>
    <source>
        <strain>cv. Danvers Half-long</strain>
    </source>
</reference>
<evidence type="ECO:0000255" key="1">
    <source>
        <dbReference type="HAMAP-Rule" id="MF_00445"/>
    </source>
</evidence>
<dbReference type="EC" id="7.1.1.-" evidence="1"/>
<dbReference type="EMBL" id="DQ898156">
    <property type="protein sequence ID" value="ABI32485.1"/>
    <property type="molecule type" value="Genomic_DNA"/>
</dbReference>
<dbReference type="SMR" id="P0CC55"/>
<dbReference type="GO" id="GO:0009535">
    <property type="term" value="C:chloroplast thylakoid membrane"/>
    <property type="evidence" value="ECO:0007669"/>
    <property type="project" value="UniProtKB-SubCell"/>
</dbReference>
<dbReference type="GO" id="GO:0008137">
    <property type="term" value="F:NADH dehydrogenase (ubiquinone) activity"/>
    <property type="evidence" value="ECO:0007669"/>
    <property type="project" value="InterPro"/>
</dbReference>
<dbReference type="GO" id="GO:0048038">
    <property type="term" value="F:quinone binding"/>
    <property type="evidence" value="ECO:0007669"/>
    <property type="project" value="UniProtKB-KW"/>
</dbReference>
<dbReference type="GO" id="GO:0042773">
    <property type="term" value="P:ATP synthesis coupled electron transport"/>
    <property type="evidence" value="ECO:0007669"/>
    <property type="project" value="InterPro"/>
</dbReference>
<dbReference type="GO" id="GO:0019684">
    <property type="term" value="P:photosynthesis, light reaction"/>
    <property type="evidence" value="ECO:0007669"/>
    <property type="project" value="UniProtKB-UniRule"/>
</dbReference>
<dbReference type="HAMAP" id="MF_00445">
    <property type="entry name" value="NDH1_NuoN_1"/>
    <property type="match status" value="1"/>
</dbReference>
<dbReference type="InterPro" id="IPR010096">
    <property type="entry name" value="NADH-Q_OxRdtase_suN/2"/>
</dbReference>
<dbReference type="InterPro" id="IPR001750">
    <property type="entry name" value="ND/Mrp_TM"/>
</dbReference>
<dbReference type="InterPro" id="IPR045693">
    <property type="entry name" value="Ndh2_N"/>
</dbReference>
<dbReference type="NCBIfam" id="TIGR01770">
    <property type="entry name" value="NDH_I_N"/>
    <property type="match status" value="1"/>
</dbReference>
<dbReference type="NCBIfam" id="NF002701">
    <property type="entry name" value="PRK02504.1"/>
    <property type="match status" value="1"/>
</dbReference>
<dbReference type="PANTHER" id="PTHR22773">
    <property type="entry name" value="NADH DEHYDROGENASE"/>
    <property type="match status" value="1"/>
</dbReference>
<dbReference type="Pfam" id="PF19530">
    <property type="entry name" value="Ndh2_N"/>
    <property type="match status" value="1"/>
</dbReference>
<dbReference type="Pfam" id="PF00361">
    <property type="entry name" value="Proton_antipo_M"/>
    <property type="match status" value="1"/>
</dbReference>
<dbReference type="PRINTS" id="PR01434">
    <property type="entry name" value="NADHDHGNASE5"/>
</dbReference>
<protein>
    <recommendedName>
        <fullName evidence="1">NAD(P)H-quinone oxidoreductase subunit 2 B, chloroplastic</fullName>
        <ecNumber evidence="1">7.1.1.-</ecNumber>
    </recommendedName>
    <alternativeName>
        <fullName evidence="1">NAD(P)H dehydrogenase, subunit 2 B</fullName>
    </alternativeName>
    <alternativeName>
        <fullName evidence="1">NADH-plastoquinone oxidoreductase subunit 2 B</fullName>
    </alternativeName>
</protein>
<organism>
    <name type="scientific">Daucus carota</name>
    <name type="common">Wild carrot</name>
    <dbReference type="NCBI Taxonomy" id="4039"/>
    <lineage>
        <taxon>Eukaryota</taxon>
        <taxon>Viridiplantae</taxon>
        <taxon>Streptophyta</taxon>
        <taxon>Embryophyta</taxon>
        <taxon>Tracheophyta</taxon>
        <taxon>Spermatophyta</taxon>
        <taxon>Magnoliopsida</taxon>
        <taxon>eudicotyledons</taxon>
        <taxon>Gunneridae</taxon>
        <taxon>Pentapetalae</taxon>
        <taxon>asterids</taxon>
        <taxon>campanulids</taxon>
        <taxon>Apiales</taxon>
        <taxon>Apiaceae</taxon>
        <taxon>Apioideae</taxon>
        <taxon>Scandiceae</taxon>
        <taxon>Daucinae</taxon>
        <taxon>Daucus</taxon>
        <taxon>Daucus sect. Daucus</taxon>
    </lineage>
</organism>
<keyword id="KW-0150">Chloroplast</keyword>
<keyword id="KW-0472">Membrane</keyword>
<keyword id="KW-0520">NAD</keyword>
<keyword id="KW-0521">NADP</keyword>
<keyword id="KW-0934">Plastid</keyword>
<keyword id="KW-0618">Plastoquinone</keyword>
<keyword id="KW-0874">Quinone</keyword>
<keyword id="KW-0793">Thylakoid</keyword>
<keyword id="KW-1278">Translocase</keyword>
<keyword id="KW-0812">Transmembrane</keyword>
<keyword id="KW-1133">Transmembrane helix</keyword>
<keyword id="KW-0813">Transport</keyword>
<comment type="function">
    <text evidence="1">NDH shuttles electrons from NAD(P)H:plastoquinone, via FMN and iron-sulfur (Fe-S) centers, to quinones in the photosynthetic chain and possibly in a chloroplast respiratory chain. The immediate electron acceptor for the enzyme in this species is believed to be plastoquinone. Couples the redox reaction to proton translocation, and thus conserves the redox energy in a proton gradient.</text>
</comment>
<comment type="catalytic activity">
    <reaction evidence="1">
        <text>a plastoquinone + NADH + (n+1) H(+)(in) = a plastoquinol + NAD(+) + n H(+)(out)</text>
        <dbReference type="Rhea" id="RHEA:42608"/>
        <dbReference type="Rhea" id="RHEA-COMP:9561"/>
        <dbReference type="Rhea" id="RHEA-COMP:9562"/>
        <dbReference type="ChEBI" id="CHEBI:15378"/>
        <dbReference type="ChEBI" id="CHEBI:17757"/>
        <dbReference type="ChEBI" id="CHEBI:57540"/>
        <dbReference type="ChEBI" id="CHEBI:57945"/>
        <dbReference type="ChEBI" id="CHEBI:62192"/>
    </reaction>
</comment>
<comment type="catalytic activity">
    <reaction evidence="1">
        <text>a plastoquinone + NADPH + (n+1) H(+)(in) = a plastoquinol + NADP(+) + n H(+)(out)</text>
        <dbReference type="Rhea" id="RHEA:42612"/>
        <dbReference type="Rhea" id="RHEA-COMP:9561"/>
        <dbReference type="Rhea" id="RHEA-COMP:9562"/>
        <dbReference type="ChEBI" id="CHEBI:15378"/>
        <dbReference type="ChEBI" id="CHEBI:17757"/>
        <dbReference type="ChEBI" id="CHEBI:57783"/>
        <dbReference type="ChEBI" id="CHEBI:58349"/>
        <dbReference type="ChEBI" id="CHEBI:62192"/>
    </reaction>
</comment>
<comment type="subunit">
    <text evidence="1">NDH is composed of at least 16 different subunits, 5 of which are encoded in the nucleus.</text>
</comment>
<comment type="subcellular location">
    <subcellularLocation>
        <location evidence="1">Plastid</location>
        <location evidence="1">Chloroplast thylakoid membrane</location>
        <topology evidence="1">Multi-pass membrane protein</topology>
    </subcellularLocation>
</comment>
<comment type="similarity">
    <text evidence="1">Belongs to the complex I subunit 2 family.</text>
</comment>
<name>NU2C2_DAUCA</name>
<accession>P0CC55</accession>
<accession>Q0G9Q2</accession>